<evidence type="ECO:0000255" key="1">
    <source>
        <dbReference type="HAMAP-Rule" id="MF_01274"/>
    </source>
</evidence>
<proteinExistence type="inferred from homology"/>
<gene>
    <name evidence="1" type="primary">coaX</name>
    <name type="ordered locus">Mmwyl1_4291</name>
</gene>
<dbReference type="EC" id="2.7.1.33" evidence="1"/>
<dbReference type="EMBL" id="CP000749">
    <property type="protein sequence ID" value="ABR73186.1"/>
    <property type="molecule type" value="Genomic_DNA"/>
</dbReference>
<dbReference type="SMR" id="A6W3A7"/>
<dbReference type="STRING" id="400668.Mmwyl1_4291"/>
<dbReference type="KEGG" id="mmw:Mmwyl1_4291"/>
<dbReference type="eggNOG" id="COG1521">
    <property type="taxonomic scope" value="Bacteria"/>
</dbReference>
<dbReference type="HOGENOM" id="CLU_066627_0_0_6"/>
<dbReference type="OrthoDB" id="9781305at2"/>
<dbReference type="UniPathway" id="UPA00241">
    <property type="reaction ID" value="UER00352"/>
</dbReference>
<dbReference type="GO" id="GO:0005737">
    <property type="term" value="C:cytoplasm"/>
    <property type="evidence" value="ECO:0007669"/>
    <property type="project" value="UniProtKB-SubCell"/>
</dbReference>
<dbReference type="GO" id="GO:0005524">
    <property type="term" value="F:ATP binding"/>
    <property type="evidence" value="ECO:0007669"/>
    <property type="project" value="UniProtKB-UniRule"/>
</dbReference>
<dbReference type="GO" id="GO:0046872">
    <property type="term" value="F:metal ion binding"/>
    <property type="evidence" value="ECO:0007669"/>
    <property type="project" value="UniProtKB-KW"/>
</dbReference>
<dbReference type="GO" id="GO:0004594">
    <property type="term" value="F:pantothenate kinase activity"/>
    <property type="evidence" value="ECO:0007669"/>
    <property type="project" value="UniProtKB-UniRule"/>
</dbReference>
<dbReference type="GO" id="GO:0015937">
    <property type="term" value="P:coenzyme A biosynthetic process"/>
    <property type="evidence" value="ECO:0007669"/>
    <property type="project" value="UniProtKB-UniRule"/>
</dbReference>
<dbReference type="CDD" id="cd24015">
    <property type="entry name" value="ASKHA_NBD_PanK-III"/>
    <property type="match status" value="1"/>
</dbReference>
<dbReference type="Gene3D" id="3.30.420.40">
    <property type="match status" value="2"/>
</dbReference>
<dbReference type="HAMAP" id="MF_01274">
    <property type="entry name" value="Pantothen_kinase_3"/>
    <property type="match status" value="1"/>
</dbReference>
<dbReference type="InterPro" id="IPR043129">
    <property type="entry name" value="ATPase_NBD"/>
</dbReference>
<dbReference type="InterPro" id="IPR004619">
    <property type="entry name" value="Type_III_PanK"/>
</dbReference>
<dbReference type="NCBIfam" id="TIGR00671">
    <property type="entry name" value="baf"/>
    <property type="match status" value="1"/>
</dbReference>
<dbReference type="PANTHER" id="PTHR34265">
    <property type="entry name" value="TYPE III PANTOTHENATE KINASE"/>
    <property type="match status" value="1"/>
</dbReference>
<dbReference type="PANTHER" id="PTHR34265:SF1">
    <property type="entry name" value="TYPE III PANTOTHENATE KINASE"/>
    <property type="match status" value="1"/>
</dbReference>
<dbReference type="Pfam" id="PF03309">
    <property type="entry name" value="Pan_kinase"/>
    <property type="match status" value="1"/>
</dbReference>
<dbReference type="SUPFAM" id="SSF53067">
    <property type="entry name" value="Actin-like ATPase domain"/>
    <property type="match status" value="2"/>
</dbReference>
<reference key="1">
    <citation type="submission" date="2007-06" db="EMBL/GenBank/DDBJ databases">
        <title>Complete sequence of Marinomonas sp. MWYL1.</title>
        <authorList>
            <consortium name="US DOE Joint Genome Institute"/>
            <person name="Copeland A."/>
            <person name="Lucas S."/>
            <person name="Lapidus A."/>
            <person name="Barry K."/>
            <person name="Glavina del Rio T."/>
            <person name="Dalin E."/>
            <person name="Tice H."/>
            <person name="Pitluck S."/>
            <person name="Kiss H."/>
            <person name="Brettin T."/>
            <person name="Bruce D."/>
            <person name="Detter J.C."/>
            <person name="Han C."/>
            <person name="Schmutz J."/>
            <person name="Larimer F."/>
            <person name="Land M."/>
            <person name="Hauser L."/>
            <person name="Kyrpides N."/>
            <person name="Kim E."/>
            <person name="Johnston A.W.B."/>
            <person name="Todd J.D."/>
            <person name="Rogers R."/>
            <person name="Wexler M."/>
            <person name="Bond P.L."/>
            <person name="Li Y."/>
            <person name="Richardson P."/>
        </authorList>
    </citation>
    <scope>NUCLEOTIDE SEQUENCE [LARGE SCALE GENOMIC DNA]</scope>
    <source>
        <strain>MWYL1</strain>
    </source>
</reference>
<keyword id="KW-0067">ATP-binding</keyword>
<keyword id="KW-0173">Coenzyme A biosynthesis</keyword>
<keyword id="KW-0963">Cytoplasm</keyword>
<keyword id="KW-0418">Kinase</keyword>
<keyword id="KW-0479">Metal-binding</keyword>
<keyword id="KW-0547">Nucleotide-binding</keyword>
<keyword id="KW-0630">Potassium</keyword>
<keyword id="KW-0808">Transferase</keyword>
<protein>
    <recommendedName>
        <fullName evidence="1">Type III pantothenate kinase</fullName>
        <ecNumber evidence="1">2.7.1.33</ecNumber>
    </recommendedName>
    <alternativeName>
        <fullName evidence="1">PanK-III</fullName>
    </alternativeName>
    <alternativeName>
        <fullName evidence="1">Pantothenic acid kinase</fullName>
    </alternativeName>
</protein>
<feature type="chain" id="PRO_1000140248" description="Type III pantothenate kinase">
    <location>
        <begin position="1"/>
        <end position="244"/>
    </location>
</feature>
<feature type="active site" description="Proton acceptor" evidence="1">
    <location>
        <position position="99"/>
    </location>
</feature>
<feature type="binding site" evidence="1">
    <location>
        <begin position="11"/>
        <end position="18"/>
    </location>
    <ligand>
        <name>ATP</name>
        <dbReference type="ChEBI" id="CHEBI:30616"/>
    </ligand>
</feature>
<feature type="binding site" evidence="1">
    <location>
        <position position="90"/>
    </location>
    <ligand>
        <name>substrate</name>
    </ligand>
</feature>
<feature type="binding site" evidence="1">
    <location>
        <begin position="97"/>
        <end position="100"/>
    </location>
    <ligand>
        <name>substrate</name>
    </ligand>
</feature>
<feature type="binding site" evidence="1">
    <location>
        <position position="119"/>
    </location>
    <ligand>
        <name>K(+)</name>
        <dbReference type="ChEBI" id="CHEBI:29103"/>
    </ligand>
</feature>
<feature type="binding site" evidence="1">
    <location>
        <position position="122"/>
    </location>
    <ligand>
        <name>ATP</name>
        <dbReference type="ChEBI" id="CHEBI:30616"/>
    </ligand>
</feature>
<feature type="binding site" evidence="1">
    <location>
        <position position="175"/>
    </location>
    <ligand>
        <name>substrate</name>
    </ligand>
</feature>
<sequence>MSVESRVLVVDAGNTSIKFTAFEGEQVLWVLRGDSCPAETDFAPQVIYFASVRSKEQSALLHADVQAAFPSSEWITLTSQATACCVRNAYIEPERLGIDRWLGVVAAHHLIKGNVVVVDAGTAIKVDVVNSEGAHLGGYIAPGLAMMTESLLSKTARIRFDSHEVVEGEGLPNSTARAVTEGCHEMALGFLERIHHLYPEFKWVVTGGDAQALLNRLGIALECFPNLVALGAKLVGDEQLRGNK</sequence>
<name>COAX_MARMS</name>
<comment type="function">
    <text evidence="1">Catalyzes the phosphorylation of pantothenate (Pan), the first step in CoA biosynthesis.</text>
</comment>
<comment type="catalytic activity">
    <reaction evidence="1">
        <text>(R)-pantothenate + ATP = (R)-4'-phosphopantothenate + ADP + H(+)</text>
        <dbReference type="Rhea" id="RHEA:16373"/>
        <dbReference type="ChEBI" id="CHEBI:10986"/>
        <dbReference type="ChEBI" id="CHEBI:15378"/>
        <dbReference type="ChEBI" id="CHEBI:29032"/>
        <dbReference type="ChEBI" id="CHEBI:30616"/>
        <dbReference type="ChEBI" id="CHEBI:456216"/>
        <dbReference type="EC" id="2.7.1.33"/>
    </reaction>
</comment>
<comment type="cofactor">
    <cofactor evidence="1">
        <name>NH4(+)</name>
        <dbReference type="ChEBI" id="CHEBI:28938"/>
    </cofactor>
    <cofactor evidence="1">
        <name>K(+)</name>
        <dbReference type="ChEBI" id="CHEBI:29103"/>
    </cofactor>
    <text evidence="1">A monovalent cation. Ammonium or potassium.</text>
</comment>
<comment type="pathway">
    <text evidence="1">Cofactor biosynthesis; coenzyme A biosynthesis; CoA from (R)-pantothenate: step 1/5.</text>
</comment>
<comment type="subunit">
    <text evidence="1">Homodimer.</text>
</comment>
<comment type="subcellular location">
    <subcellularLocation>
        <location evidence="1">Cytoplasm</location>
    </subcellularLocation>
</comment>
<comment type="similarity">
    <text evidence="1">Belongs to the type III pantothenate kinase family.</text>
</comment>
<organism>
    <name type="scientific">Marinomonas sp. (strain MWYL1)</name>
    <dbReference type="NCBI Taxonomy" id="400668"/>
    <lineage>
        <taxon>Bacteria</taxon>
        <taxon>Pseudomonadati</taxon>
        <taxon>Pseudomonadota</taxon>
        <taxon>Gammaproteobacteria</taxon>
        <taxon>Oceanospirillales</taxon>
        <taxon>Oceanospirillaceae</taxon>
        <taxon>Marinomonas</taxon>
    </lineage>
</organism>
<accession>A6W3A7</accession>